<gene>
    <name evidence="1" type="primary">recR</name>
    <name type="ordered locus">Oant_0023</name>
</gene>
<proteinExistence type="inferred from homology"/>
<feature type="chain" id="PRO_1000001569" description="Recombination protein RecR">
    <location>
        <begin position="1"/>
        <end position="201"/>
    </location>
</feature>
<feature type="domain" description="Toprim" evidence="1">
    <location>
        <begin position="83"/>
        <end position="178"/>
    </location>
</feature>
<feature type="zinc finger region" description="C4-type" evidence="1">
    <location>
        <begin position="60"/>
        <end position="75"/>
    </location>
</feature>
<keyword id="KW-0227">DNA damage</keyword>
<keyword id="KW-0233">DNA recombination</keyword>
<keyword id="KW-0234">DNA repair</keyword>
<keyword id="KW-0479">Metal-binding</keyword>
<keyword id="KW-1185">Reference proteome</keyword>
<keyword id="KW-0862">Zinc</keyword>
<keyword id="KW-0863">Zinc-finger</keyword>
<name>RECR_BRUA4</name>
<evidence type="ECO:0000255" key="1">
    <source>
        <dbReference type="HAMAP-Rule" id="MF_00017"/>
    </source>
</evidence>
<protein>
    <recommendedName>
        <fullName evidence="1">Recombination protein RecR</fullName>
    </recommendedName>
</protein>
<sequence length="201" mass="21647">MSKRIAGPEIERLIQLLARVPGLGPRSARRAALHLIKKKEALLVPLGGAMQEAAEKVRICSCCGNVDTSDPCTICTDERRDPTTLIVVEDVSDLWALERAGTMNVRYHVLGGRLSPLDGIGPDDLNIKGLVERVSTGEIKEVILAVNATVEGQTTAHYITDQLSSFDVRVTRLAHGVPVGGELDYLDEGTLAAALRARTTL</sequence>
<dbReference type="EMBL" id="CP000758">
    <property type="protein sequence ID" value="ABS12754.1"/>
    <property type="molecule type" value="Genomic_DNA"/>
</dbReference>
<dbReference type="RefSeq" id="WP_010657830.1">
    <property type="nucleotide sequence ID" value="NC_009667.1"/>
</dbReference>
<dbReference type="SMR" id="A6WUV0"/>
<dbReference type="STRING" id="439375.Oant_0023"/>
<dbReference type="GeneID" id="61316241"/>
<dbReference type="KEGG" id="oan:Oant_0023"/>
<dbReference type="eggNOG" id="COG0353">
    <property type="taxonomic scope" value="Bacteria"/>
</dbReference>
<dbReference type="HOGENOM" id="CLU_060739_1_1_5"/>
<dbReference type="PhylomeDB" id="A6WUV0"/>
<dbReference type="Proteomes" id="UP000002301">
    <property type="component" value="Chromosome 1"/>
</dbReference>
<dbReference type="GO" id="GO:0003677">
    <property type="term" value="F:DNA binding"/>
    <property type="evidence" value="ECO:0007669"/>
    <property type="project" value="UniProtKB-UniRule"/>
</dbReference>
<dbReference type="GO" id="GO:0008270">
    <property type="term" value="F:zinc ion binding"/>
    <property type="evidence" value="ECO:0007669"/>
    <property type="project" value="UniProtKB-KW"/>
</dbReference>
<dbReference type="GO" id="GO:0006310">
    <property type="term" value="P:DNA recombination"/>
    <property type="evidence" value="ECO:0007669"/>
    <property type="project" value="UniProtKB-UniRule"/>
</dbReference>
<dbReference type="GO" id="GO:0006281">
    <property type="term" value="P:DNA repair"/>
    <property type="evidence" value="ECO:0007669"/>
    <property type="project" value="UniProtKB-UniRule"/>
</dbReference>
<dbReference type="CDD" id="cd01025">
    <property type="entry name" value="TOPRIM_recR"/>
    <property type="match status" value="1"/>
</dbReference>
<dbReference type="Gene3D" id="3.40.1360.10">
    <property type="match status" value="1"/>
</dbReference>
<dbReference type="Gene3D" id="6.10.250.240">
    <property type="match status" value="1"/>
</dbReference>
<dbReference type="Gene3D" id="1.10.8.420">
    <property type="entry name" value="RecR Domain 1"/>
    <property type="match status" value="1"/>
</dbReference>
<dbReference type="HAMAP" id="MF_00017">
    <property type="entry name" value="RecR"/>
    <property type="match status" value="1"/>
</dbReference>
<dbReference type="InterPro" id="IPR000093">
    <property type="entry name" value="DNA_Rcmb_RecR"/>
</dbReference>
<dbReference type="InterPro" id="IPR023627">
    <property type="entry name" value="Rcmb_RecR"/>
</dbReference>
<dbReference type="InterPro" id="IPR015967">
    <property type="entry name" value="Rcmb_RecR_Znf"/>
</dbReference>
<dbReference type="InterPro" id="IPR006171">
    <property type="entry name" value="TOPRIM_dom"/>
</dbReference>
<dbReference type="InterPro" id="IPR034137">
    <property type="entry name" value="TOPRIM_RecR"/>
</dbReference>
<dbReference type="NCBIfam" id="TIGR00615">
    <property type="entry name" value="recR"/>
    <property type="match status" value="1"/>
</dbReference>
<dbReference type="PANTHER" id="PTHR30446">
    <property type="entry name" value="RECOMBINATION PROTEIN RECR"/>
    <property type="match status" value="1"/>
</dbReference>
<dbReference type="PANTHER" id="PTHR30446:SF0">
    <property type="entry name" value="RECOMBINATION PROTEIN RECR"/>
    <property type="match status" value="1"/>
</dbReference>
<dbReference type="Pfam" id="PF21175">
    <property type="entry name" value="RecR_C"/>
    <property type="match status" value="1"/>
</dbReference>
<dbReference type="Pfam" id="PF21176">
    <property type="entry name" value="RecR_HhH"/>
    <property type="match status" value="1"/>
</dbReference>
<dbReference type="Pfam" id="PF02132">
    <property type="entry name" value="RecR_ZnF"/>
    <property type="match status" value="1"/>
</dbReference>
<dbReference type="Pfam" id="PF13662">
    <property type="entry name" value="Toprim_4"/>
    <property type="match status" value="1"/>
</dbReference>
<dbReference type="SMART" id="SM00493">
    <property type="entry name" value="TOPRIM"/>
    <property type="match status" value="1"/>
</dbReference>
<dbReference type="SUPFAM" id="SSF111304">
    <property type="entry name" value="Recombination protein RecR"/>
    <property type="match status" value="1"/>
</dbReference>
<dbReference type="PROSITE" id="PS01300">
    <property type="entry name" value="RECR"/>
    <property type="match status" value="1"/>
</dbReference>
<dbReference type="PROSITE" id="PS50880">
    <property type="entry name" value="TOPRIM"/>
    <property type="match status" value="1"/>
</dbReference>
<accession>A6WUV0</accession>
<reference key="1">
    <citation type="journal article" date="2011" name="J. Bacteriol.">
        <title>Genome of Ochrobactrum anthropi ATCC 49188 T, a versatile opportunistic pathogen and symbiont of several eukaryotic hosts.</title>
        <authorList>
            <person name="Chain P.S."/>
            <person name="Lang D.M."/>
            <person name="Comerci D.J."/>
            <person name="Malfatti S.A."/>
            <person name="Vergez L.M."/>
            <person name="Shin M."/>
            <person name="Ugalde R.A."/>
            <person name="Garcia E."/>
            <person name="Tolmasky M.E."/>
        </authorList>
    </citation>
    <scope>NUCLEOTIDE SEQUENCE [LARGE SCALE GENOMIC DNA]</scope>
    <source>
        <strain>ATCC 49188 / DSM 6882 / CCUG 24695 / JCM 21032 / LMG 3331 / NBRC 15819 / NCTC 12168 / Alc 37</strain>
    </source>
</reference>
<comment type="function">
    <text evidence="1">May play a role in DNA repair. It seems to be involved in an RecBC-independent recombinational process of DNA repair. It may act with RecF and RecO.</text>
</comment>
<comment type="similarity">
    <text evidence="1">Belongs to the RecR family.</text>
</comment>
<organism>
    <name type="scientific">Brucella anthropi (strain ATCC 49188 / DSM 6882 / CCUG 24695 / JCM 21032 / LMG 3331 / NBRC 15819 / NCTC 12168 / Alc 37)</name>
    <name type="common">Ochrobactrum anthropi</name>
    <dbReference type="NCBI Taxonomy" id="439375"/>
    <lineage>
        <taxon>Bacteria</taxon>
        <taxon>Pseudomonadati</taxon>
        <taxon>Pseudomonadota</taxon>
        <taxon>Alphaproteobacteria</taxon>
        <taxon>Hyphomicrobiales</taxon>
        <taxon>Brucellaceae</taxon>
        <taxon>Brucella/Ochrobactrum group</taxon>
        <taxon>Brucella</taxon>
    </lineage>
</organism>